<feature type="chain" id="PRO_0000375479" description="Succinyl-diaminopimelate desuccinylase">
    <location>
        <begin position="1"/>
        <end position="379"/>
    </location>
</feature>
<feature type="active site" evidence="1">
    <location>
        <position position="70"/>
    </location>
</feature>
<feature type="active site" description="Proton acceptor" evidence="1">
    <location>
        <position position="135"/>
    </location>
</feature>
<feature type="binding site" evidence="1">
    <location>
        <position position="68"/>
    </location>
    <ligand>
        <name>Zn(2+)</name>
        <dbReference type="ChEBI" id="CHEBI:29105"/>
        <label>1</label>
    </ligand>
</feature>
<feature type="binding site" evidence="1">
    <location>
        <position position="101"/>
    </location>
    <ligand>
        <name>Zn(2+)</name>
        <dbReference type="ChEBI" id="CHEBI:29105"/>
        <label>1</label>
    </ligand>
</feature>
<feature type="binding site" evidence="1">
    <location>
        <position position="101"/>
    </location>
    <ligand>
        <name>Zn(2+)</name>
        <dbReference type="ChEBI" id="CHEBI:29105"/>
        <label>2</label>
    </ligand>
</feature>
<feature type="binding site" evidence="1">
    <location>
        <position position="136"/>
    </location>
    <ligand>
        <name>Zn(2+)</name>
        <dbReference type="ChEBI" id="CHEBI:29105"/>
        <label>2</label>
    </ligand>
</feature>
<feature type="binding site" evidence="1">
    <location>
        <position position="164"/>
    </location>
    <ligand>
        <name>Zn(2+)</name>
        <dbReference type="ChEBI" id="CHEBI:29105"/>
        <label>1</label>
    </ligand>
</feature>
<feature type="binding site" evidence="1">
    <location>
        <position position="350"/>
    </location>
    <ligand>
        <name>Zn(2+)</name>
        <dbReference type="ChEBI" id="CHEBI:29105"/>
        <label>2</label>
    </ligand>
</feature>
<feature type="sequence conflict" description="In Ref. 1; CAA08876." evidence="2" ref="1">
    <original>V</original>
    <variation>G</variation>
    <location>
        <position position="119"/>
    </location>
</feature>
<feature type="sequence conflict" description="In Ref. 1; CAA08876." evidence="2" ref="1">
    <original>C</original>
    <variation>S</variation>
    <location>
        <position position="147"/>
    </location>
</feature>
<feature type="sequence conflict" description="In Ref. 1; CAA08876." evidence="2" ref="1">
    <original>GLQAELSTTGGTS</original>
    <variation>DCRPNSRPPAAHP</variation>
    <location>
        <begin position="315"/>
        <end position="327"/>
    </location>
</feature>
<name>DAPE_BORPE</name>
<gene>
    <name evidence="1" type="primary">dapE</name>
    <name type="ordered locus">BP1763</name>
</gene>
<dbReference type="EC" id="3.5.1.18" evidence="1"/>
<dbReference type="EMBL" id="AJ009834">
    <property type="protein sequence ID" value="CAA08876.1"/>
    <property type="molecule type" value="Genomic_DNA"/>
</dbReference>
<dbReference type="EMBL" id="BX640416">
    <property type="protein sequence ID" value="CAE42050.1"/>
    <property type="molecule type" value="Genomic_DNA"/>
</dbReference>
<dbReference type="RefSeq" id="NP_880475.1">
    <property type="nucleotide sequence ID" value="NC_002929.2"/>
</dbReference>
<dbReference type="RefSeq" id="WP_010930548.1">
    <property type="nucleotide sequence ID" value="NZ_CP039022.1"/>
</dbReference>
<dbReference type="SMR" id="Q7VXJ5"/>
<dbReference type="STRING" id="257313.BP1763"/>
<dbReference type="PaxDb" id="257313-BP1763"/>
<dbReference type="GeneID" id="69602060"/>
<dbReference type="KEGG" id="bpe:BP1763"/>
<dbReference type="PATRIC" id="fig|257313.5.peg.1892"/>
<dbReference type="eggNOG" id="COG0624">
    <property type="taxonomic scope" value="Bacteria"/>
</dbReference>
<dbReference type="HOGENOM" id="CLU_021802_4_0_4"/>
<dbReference type="UniPathway" id="UPA00034">
    <property type="reaction ID" value="UER00021"/>
</dbReference>
<dbReference type="Proteomes" id="UP000002676">
    <property type="component" value="Chromosome"/>
</dbReference>
<dbReference type="GO" id="GO:0008777">
    <property type="term" value="F:acetylornithine deacetylase activity"/>
    <property type="evidence" value="ECO:0007669"/>
    <property type="project" value="TreeGrafter"/>
</dbReference>
<dbReference type="GO" id="GO:0050897">
    <property type="term" value="F:cobalt ion binding"/>
    <property type="evidence" value="ECO:0007669"/>
    <property type="project" value="UniProtKB-UniRule"/>
</dbReference>
<dbReference type="GO" id="GO:0009014">
    <property type="term" value="F:succinyl-diaminopimelate desuccinylase activity"/>
    <property type="evidence" value="ECO:0007669"/>
    <property type="project" value="UniProtKB-UniRule"/>
</dbReference>
<dbReference type="GO" id="GO:0008270">
    <property type="term" value="F:zinc ion binding"/>
    <property type="evidence" value="ECO:0007669"/>
    <property type="project" value="UniProtKB-UniRule"/>
</dbReference>
<dbReference type="GO" id="GO:0019877">
    <property type="term" value="P:diaminopimelate biosynthetic process"/>
    <property type="evidence" value="ECO:0007669"/>
    <property type="project" value="UniProtKB-UniRule"/>
</dbReference>
<dbReference type="GO" id="GO:0006526">
    <property type="term" value="P:L-arginine biosynthetic process"/>
    <property type="evidence" value="ECO:0007669"/>
    <property type="project" value="TreeGrafter"/>
</dbReference>
<dbReference type="GO" id="GO:0009089">
    <property type="term" value="P:lysine biosynthetic process via diaminopimelate"/>
    <property type="evidence" value="ECO:0007669"/>
    <property type="project" value="UniProtKB-UniRule"/>
</dbReference>
<dbReference type="CDD" id="cd03891">
    <property type="entry name" value="M20_DapE_proteobac"/>
    <property type="match status" value="1"/>
</dbReference>
<dbReference type="FunFam" id="3.30.70.360:FF:000011">
    <property type="entry name" value="Succinyl-diaminopimelate desuccinylase"/>
    <property type="match status" value="1"/>
</dbReference>
<dbReference type="FunFam" id="3.40.630.10:FF:000005">
    <property type="entry name" value="Succinyl-diaminopimelate desuccinylase"/>
    <property type="match status" value="1"/>
</dbReference>
<dbReference type="Gene3D" id="1.10.150.900">
    <property type="match status" value="1"/>
</dbReference>
<dbReference type="Gene3D" id="3.30.70.360">
    <property type="match status" value="1"/>
</dbReference>
<dbReference type="Gene3D" id="3.40.630.10">
    <property type="entry name" value="Zn peptidases"/>
    <property type="match status" value="1"/>
</dbReference>
<dbReference type="HAMAP" id="MF_01690">
    <property type="entry name" value="DapE"/>
    <property type="match status" value="1"/>
</dbReference>
<dbReference type="InterPro" id="IPR036264">
    <property type="entry name" value="Bact_exopeptidase_dim_dom"/>
</dbReference>
<dbReference type="InterPro" id="IPR005941">
    <property type="entry name" value="DapE_proteobac"/>
</dbReference>
<dbReference type="InterPro" id="IPR002933">
    <property type="entry name" value="Peptidase_M20"/>
</dbReference>
<dbReference type="InterPro" id="IPR011650">
    <property type="entry name" value="Peptidase_M20_dimer"/>
</dbReference>
<dbReference type="InterPro" id="IPR050072">
    <property type="entry name" value="Peptidase_M20A"/>
</dbReference>
<dbReference type="NCBIfam" id="TIGR01246">
    <property type="entry name" value="dapE_proteo"/>
    <property type="match status" value="1"/>
</dbReference>
<dbReference type="NCBIfam" id="NF009557">
    <property type="entry name" value="PRK13009.1"/>
    <property type="match status" value="1"/>
</dbReference>
<dbReference type="PANTHER" id="PTHR43808">
    <property type="entry name" value="ACETYLORNITHINE DEACETYLASE"/>
    <property type="match status" value="1"/>
</dbReference>
<dbReference type="PANTHER" id="PTHR43808:SF31">
    <property type="entry name" value="N-ACETYL-L-CITRULLINE DEACETYLASE"/>
    <property type="match status" value="1"/>
</dbReference>
<dbReference type="Pfam" id="PF07687">
    <property type="entry name" value="M20_dimer"/>
    <property type="match status" value="1"/>
</dbReference>
<dbReference type="Pfam" id="PF01546">
    <property type="entry name" value="Peptidase_M20"/>
    <property type="match status" value="1"/>
</dbReference>
<dbReference type="SUPFAM" id="SSF55031">
    <property type="entry name" value="Bacterial exopeptidase dimerisation domain"/>
    <property type="match status" value="1"/>
</dbReference>
<dbReference type="SUPFAM" id="SSF53187">
    <property type="entry name" value="Zn-dependent exopeptidases"/>
    <property type="match status" value="1"/>
</dbReference>
<dbReference type="PROSITE" id="PS00759">
    <property type="entry name" value="ARGE_DAPE_CPG2_2"/>
    <property type="match status" value="1"/>
</dbReference>
<sequence>MTASAVLDLVKDLIARPSVTPDDVDCQMLLAQRLERIGFQCETIARGGVTNLWARRGAGAPLTVFAGHTDVVPPGPRDKWDSDPFVPTERDGFLYGRGAADMKSSIAAFVVAAEEFVAVHPEHPGSIALLITSDEEGPAVDGTVIVCDELRQRGEQLDYCIVGEPTSTEALGDVCKNGRRGSLSGRLLVKGVQGHVAYPHLARNPVHQLAPALTELVAIEWDQGNEYFPPTTFQVSNLHAGTGATNVVPGEAVALFNFRFSTASTPGQLKARVHEVLDRHGLEYQLDWELGGEPFLTPRGSLTDALVSAIQAETGLQAELSTTGGTSDGRFIARICPQVIEFGPCNATIHKVNERIELSSLAPLKNIYRRTLENLLLAD</sequence>
<keyword id="KW-0028">Amino-acid biosynthesis</keyword>
<keyword id="KW-0170">Cobalt</keyword>
<keyword id="KW-0220">Diaminopimelate biosynthesis</keyword>
<keyword id="KW-0378">Hydrolase</keyword>
<keyword id="KW-0457">Lysine biosynthesis</keyword>
<keyword id="KW-0479">Metal-binding</keyword>
<keyword id="KW-1185">Reference proteome</keyword>
<keyword id="KW-0862">Zinc</keyword>
<comment type="function">
    <text evidence="1">Catalyzes the hydrolysis of N-succinyl-L,L-diaminopimelic acid (SDAP), forming succinate and LL-2,6-diaminopimelate (DAP), an intermediate involved in the bacterial biosynthesis of lysine and meso-diaminopimelic acid, an essential component of bacterial cell walls.</text>
</comment>
<comment type="catalytic activity">
    <reaction evidence="1">
        <text>N-succinyl-(2S,6S)-2,6-diaminopimelate + H2O = (2S,6S)-2,6-diaminopimelate + succinate</text>
        <dbReference type="Rhea" id="RHEA:22608"/>
        <dbReference type="ChEBI" id="CHEBI:15377"/>
        <dbReference type="ChEBI" id="CHEBI:30031"/>
        <dbReference type="ChEBI" id="CHEBI:57609"/>
        <dbReference type="ChEBI" id="CHEBI:58087"/>
        <dbReference type="EC" id="3.5.1.18"/>
    </reaction>
</comment>
<comment type="cofactor">
    <cofactor evidence="1">
        <name>Zn(2+)</name>
        <dbReference type="ChEBI" id="CHEBI:29105"/>
    </cofactor>
    <cofactor evidence="1">
        <name>Co(2+)</name>
        <dbReference type="ChEBI" id="CHEBI:48828"/>
    </cofactor>
    <text evidence="1">Binds 2 Zn(2+) or Co(2+) ions per subunit.</text>
</comment>
<comment type="pathway">
    <text evidence="1">Amino-acid biosynthesis; L-lysine biosynthesis via DAP pathway; LL-2,6-diaminopimelate from (S)-tetrahydrodipicolinate (succinylase route): step 3/3.</text>
</comment>
<comment type="subunit">
    <text evidence="1">Homodimer.</text>
</comment>
<comment type="similarity">
    <text evidence="1">Belongs to the peptidase M20A family. DapE subfamily.</text>
</comment>
<reference key="1">
    <citation type="journal article" date="2000" name="J. Bacteriol.">
        <title>Characterization of a Bordetella pertussis diaminopimelate (DAP) biosynthesis locus identifies dapC, a novel gene coding for an N-succinyl-L,L-DAP aminotransferase.</title>
        <authorList>
            <person name="Fuchs T.M."/>
            <person name="Schneider B."/>
            <person name="Krumbach K."/>
            <person name="Eggeling L."/>
            <person name="Gross R."/>
        </authorList>
    </citation>
    <scope>NUCLEOTIDE SEQUENCE [GENOMIC DNA]</scope>
    <source>
        <strain>Tohama I / BP338</strain>
    </source>
</reference>
<reference key="2">
    <citation type="journal article" date="2003" name="Nat. Genet.">
        <title>Comparative analysis of the genome sequences of Bordetella pertussis, Bordetella parapertussis and Bordetella bronchiseptica.</title>
        <authorList>
            <person name="Parkhill J."/>
            <person name="Sebaihia M."/>
            <person name="Preston A."/>
            <person name="Murphy L.D."/>
            <person name="Thomson N.R."/>
            <person name="Harris D.E."/>
            <person name="Holden M.T.G."/>
            <person name="Churcher C.M."/>
            <person name="Bentley S.D."/>
            <person name="Mungall K.L."/>
            <person name="Cerdeno-Tarraga A.-M."/>
            <person name="Temple L."/>
            <person name="James K.D."/>
            <person name="Harris B."/>
            <person name="Quail M.A."/>
            <person name="Achtman M."/>
            <person name="Atkin R."/>
            <person name="Baker S."/>
            <person name="Basham D."/>
            <person name="Bason N."/>
            <person name="Cherevach I."/>
            <person name="Chillingworth T."/>
            <person name="Collins M."/>
            <person name="Cronin A."/>
            <person name="Davis P."/>
            <person name="Doggett J."/>
            <person name="Feltwell T."/>
            <person name="Goble A."/>
            <person name="Hamlin N."/>
            <person name="Hauser H."/>
            <person name="Holroyd S."/>
            <person name="Jagels K."/>
            <person name="Leather S."/>
            <person name="Moule S."/>
            <person name="Norberczak H."/>
            <person name="O'Neil S."/>
            <person name="Ormond D."/>
            <person name="Price C."/>
            <person name="Rabbinowitsch E."/>
            <person name="Rutter S."/>
            <person name="Sanders M."/>
            <person name="Saunders D."/>
            <person name="Seeger K."/>
            <person name="Sharp S."/>
            <person name="Simmonds M."/>
            <person name="Skelton J."/>
            <person name="Squares R."/>
            <person name="Squares S."/>
            <person name="Stevens K."/>
            <person name="Unwin L."/>
            <person name="Whitehead S."/>
            <person name="Barrell B.G."/>
            <person name="Maskell D.J."/>
        </authorList>
    </citation>
    <scope>NUCLEOTIDE SEQUENCE [LARGE SCALE GENOMIC DNA]</scope>
    <source>
        <strain>Tohama I / ATCC BAA-589 / NCTC 13251</strain>
    </source>
</reference>
<evidence type="ECO:0000255" key="1">
    <source>
        <dbReference type="HAMAP-Rule" id="MF_01690"/>
    </source>
</evidence>
<evidence type="ECO:0000305" key="2"/>
<proteinExistence type="inferred from homology"/>
<protein>
    <recommendedName>
        <fullName evidence="1">Succinyl-diaminopimelate desuccinylase</fullName>
        <shortName evidence="1">SDAP desuccinylase</shortName>
        <ecNumber evidence="1">3.5.1.18</ecNumber>
    </recommendedName>
    <alternativeName>
        <fullName evidence="1">N-succinyl-LL-2,6-diaminoheptanedioate amidohydrolase</fullName>
    </alternativeName>
</protein>
<accession>Q7VXJ5</accession>
<accession>Q9ZEX1</accession>
<organism>
    <name type="scientific">Bordetella pertussis (strain Tohama I / ATCC BAA-589 / NCTC 13251)</name>
    <dbReference type="NCBI Taxonomy" id="257313"/>
    <lineage>
        <taxon>Bacteria</taxon>
        <taxon>Pseudomonadati</taxon>
        <taxon>Pseudomonadota</taxon>
        <taxon>Betaproteobacteria</taxon>
        <taxon>Burkholderiales</taxon>
        <taxon>Alcaligenaceae</taxon>
        <taxon>Bordetella</taxon>
    </lineage>
</organism>